<geneLocation type="plasmid">
    <name>IncFII R1</name>
</geneLocation>
<accession>P23587</accession>
<evidence type="ECO:0000256" key="1">
    <source>
        <dbReference type="SAM" id="MobiDB-lite"/>
    </source>
</evidence>
<dbReference type="EMBL" id="X05813">
    <property type="status" value="NOT_ANNOTATED_CDS"/>
    <property type="molecule type" value="Genomic_DNA"/>
</dbReference>
<dbReference type="RefSeq" id="NP_863051.1">
    <property type="nucleotide sequence ID" value="NC_004998.1"/>
</dbReference>
<dbReference type="RefSeq" id="NP_957588.1">
    <property type="nucleotide sequence ID" value="NC_005327.1"/>
</dbReference>
<dbReference type="RefSeq" id="YP_001096458.1">
    <property type="nucleotide sequence ID" value="NC_009133.1"/>
</dbReference>
<dbReference type="RefSeq" id="YP_002456180.1">
    <property type="nucleotide sequence ID" value="NC_011812.1"/>
</dbReference>
<dbReference type="RefSeq" id="YP_003108240.1">
    <property type="nucleotide sequence ID" value="NC_013121.1"/>
</dbReference>
<dbReference type="RefSeq" id="YP_003108293.1">
    <property type="nucleotide sequence ID" value="NC_013122.1"/>
</dbReference>
<dbReference type="RefSeq" id="YP_006953510.1">
    <property type="nucleotide sequence ID" value="NC_019073.1"/>
</dbReference>
<dbReference type="RefSeq" id="YP_006953937.1">
    <property type="nucleotide sequence ID" value="NC_019090.1"/>
</dbReference>
<dbReference type="RefSeq" id="YP_006954260.1">
    <property type="nucleotide sequence ID" value="NC_019095.1"/>
</dbReference>
<dbReference type="RefSeq" id="YP_006990748.1">
    <property type="nucleotide sequence ID" value="NC_019424.1"/>
</dbReference>
<dbReference type="RefSeq" id="YP_007447537.1">
    <property type="nucleotide sequence ID" value="NC_020278.2"/>
</dbReference>
<dbReference type="OMA" id="LHVVNIH"/>
<dbReference type="InterPro" id="IPR035273">
    <property type="entry name" value="DUF5431"/>
</dbReference>
<dbReference type="NCBIfam" id="NF010277">
    <property type="entry name" value="PRK13720.1"/>
    <property type="match status" value="1"/>
</dbReference>
<dbReference type="Pfam" id="PF17496">
    <property type="entry name" value="DUF5431"/>
    <property type="match status" value="1"/>
</dbReference>
<organism>
    <name type="scientific">Escherichia coli</name>
    <dbReference type="NCBI Taxonomy" id="562"/>
    <lineage>
        <taxon>Bacteria</taxon>
        <taxon>Pseudomonadati</taxon>
        <taxon>Pseudomonadota</taxon>
        <taxon>Gammaproteobacteria</taxon>
        <taxon>Enterobacterales</taxon>
        <taxon>Enterobacteriaceae</taxon>
        <taxon>Escherichia</taxon>
    </lineage>
</organism>
<keyword id="KW-0614">Plasmid</keyword>
<sequence>MSSPHQDSLLPRFAQGEEGHETTTKFPCLVCVDRVSHTVDIHLSDTKIAVRDSLQRRTQGGGGFHGLRIR</sequence>
<protein>
    <recommendedName>
        <fullName>Protein FlmC homolog</fullName>
    </recommendedName>
</protein>
<name>FLMC2_ECOLX</name>
<proteinExistence type="predicted"/>
<feature type="chain" id="PRO_0000068356" description="Protein FlmC homolog">
    <location>
        <begin position="1"/>
        <end position="70"/>
    </location>
</feature>
<feature type="region of interest" description="Disordered" evidence="1">
    <location>
        <begin position="1"/>
        <end position="21"/>
    </location>
</feature>
<reference key="1">
    <citation type="journal article" date="1987" name="Mol. Gen. Genet.">
        <title>Genetic analysis of the parB+ locus of plasmid R1.</title>
        <authorList>
            <person name="Rasmussen P.B."/>
            <person name="Gerdes K."/>
            <person name="Molin S."/>
        </authorList>
    </citation>
    <scope>NUCLEOTIDE SEQUENCE [GENOMIC DNA]</scope>
    <source>
        <strain>CSH50</strain>
    </source>
</reference>
<reference key="2">
    <citation type="journal article" date="1990" name="Mol. Microbiol.">
        <title>Mechanism of post-segregational killing by the hok/sok system of plasmid R1: sok antisense RNA regulates formation of a hok mRNA species correlated with killing of plasmid-free cells.</title>
        <authorList>
            <person name="Gerdes K."/>
            <person name="Thisted T."/>
            <person name="Martinussen J."/>
        </authorList>
    </citation>
    <scope>NUCLEOTIDE SEQUENCE [GENOMIC DNA]</scope>
    <source>
        <strain>CSH50</strain>
    </source>
</reference>